<sequence>MSRHFRTHTTSRLTFPSSSGGLAITRLPFSSTSSKLLLQQLSSTSPAAAATAVTITTSSPARNLQRARASAAEQGMEEHGKAAVGWAARDDSGVLSPYNFSRRAQKDDDVTIKVLYCGICHTDLHIVKNDWGNAMYPVVPGHEIVGVVTGVGAGVTKFKAGDTVGVGYFVASCRGCECCGNGYENYCAKMVTTCNGVDHDHGGGAATQGGFSDAIVVNEHYVLRVPAGLPLDSAAPLLCAGVTVYSPMVIHGLNAPGKHVGVVGLGGLGHVAVKFAKAFGMRVTVISTSPGKRQEALEHLGADEFLVSRDAGQMAAAAATMDGILNTVSAWHPIAPLFSLMKPMAQMVFVGGPTRPLELPAYAIVPGGKGITGNCVGGIRDCQAMLDFAGEHGITAEVEVIKMDYVNTAMERLEKNDVRYRFVIDVAGSSLAGSGDAKI</sequence>
<accession>Q6ERW7</accession>
<accession>A0A0P0XN23</accession>
<accession>B9G3G5</accession>
<accession>Q0J1Z7</accession>
<proteinExistence type="evidence at transcript level"/>
<organism>
    <name type="scientific">Oryza sativa subsp. japonica</name>
    <name type="common">Rice</name>
    <dbReference type="NCBI Taxonomy" id="39947"/>
    <lineage>
        <taxon>Eukaryota</taxon>
        <taxon>Viridiplantae</taxon>
        <taxon>Streptophyta</taxon>
        <taxon>Embryophyta</taxon>
        <taxon>Tracheophyta</taxon>
        <taxon>Spermatophyta</taxon>
        <taxon>Magnoliopsida</taxon>
        <taxon>Liliopsida</taxon>
        <taxon>Poales</taxon>
        <taxon>Poaceae</taxon>
        <taxon>BOP clade</taxon>
        <taxon>Oryzoideae</taxon>
        <taxon>Oryzeae</taxon>
        <taxon>Oryzinae</taxon>
        <taxon>Oryza</taxon>
        <taxon>Oryza sativa</taxon>
    </lineage>
</organism>
<evidence type="ECO:0000250" key="1">
    <source>
        <dbReference type="UniProtKB" id="O49482"/>
    </source>
</evidence>
<evidence type="ECO:0000303" key="2">
    <source>
    </source>
</evidence>
<evidence type="ECO:0000303" key="3">
    <source>
    </source>
</evidence>
<evidence type="ECO:0000305" key="4"/>
<protein>
    <recommendedName>
        <fullName evidence="4">Probable cinnamyl alcohol dehydrogenase 8C</fullName>
        <shortName evidence="3">OsCAD8C</shortName>
        <ecNumber evidence="1">1.1.1.195</ecNumber>
    </recommendedName>
</protein>
<gene>
    <name evidence="3" type="primary">CAD8C</name>
    <name type="ordered locus">Os09g0400300</name>
    <name type="ordered locus">LOC_Os09g23550</name>
    <name type="ORF">OsJ_29283</name>
    <name type="ORF">P0435D08.33</name>
    <name type="ORF">P0650H04.15</name>
</gene>
<feature type="chain" id="PRO_0000382649" description="Probable cinnamyl alcohol dehydrogenase 8C">
    <location>
        <begin position="1"/>
        <end position="439"/>
    </location>
</feature>
<feature type="binding site" evidence="1">
    <location>
        <position position="120"/>
    </location>
    <ligand>
        <name>Zn(2+)</name>
        <dbReference type="ChEBI" id="CHEBI:29105"/>
        <label>1</label>
        <note>catalytic</note>
    </ligand>
</feature>
<feature type="binding site" evidence="1">
    <location>
        <position position="122"/>
    </location>
    <ligand>
        <name>NADP(+)</name>
        <dbReference type="ChEBI" id="CHEBI:58349"/>
    </ligand>
</feature>
<feature type="binding site" evidence="1">
    <location>
        <position position="142"/>
    </location>
    <ligand>
        <name>Zn(2+)</name>
        <dbReference type="ChEBI" id="CHEBI:29105"/>
        <label>1</label>
        <note>catalytic</note>
    </ligand>
</feature>
<feature type="binding site" evidence="1">
    <location>
        <position position="143"/>
    </location>
    <ligand>
        <name>Zn(2+)</name>
        <dbReference type="ChEBI" id="CHEBI:29105"/>
        <label>1</label>
        <note>catalytic</note>
    </ligand>
</feature>
<feature type="binding site" evidence="1">
    <location>
        <position position="173"/>
    </location>
    <ligand>
        <name>Zn(2+)</name>
        <dbReference type="ChEBI" id="CHEBI:29105"/>
        <label>2</label>
    </ligand>
</feature>
<feature type="binding site" evidence="1">
    <location>
        <position position="176"/>
    </location>
    <ligand>
        <name>Zn(2+)</name>
        <dbReference type="ChEBI" id="CHEBI:29105"/>
        <label>2</label>
    </ligand>
</feature>
<feature type="binding site" evidence="1">
    <location>
        <position position="179"/>
    </location>
    <ligand>
        <name>Zn(2+)</name>
        <dbReference type="ChEBI" id="CHEBI:29105"/>
        <label>2</label>
    </ligand>
</feature>
<feature type="binding site" evidence="1">
    <location>
        <position position="187"/>
    </location>
    <ligand>
        <name>Zn(2+)</name>
        <dbReference type="ChEBI" id="CHEBI:29105"/>
        <label>2</label>
    </ligand>
</feature>
<feature type="binding site" evidence="1">
    <location>
        <position position="239"/>
    </location>
    <ligand>
        <name>Zn(2+)</name>
        <dbReference type="ChEBI" id="CHEBI:29105"/>
        <label>1</label>
        <note>catalytic</note>
    </ligand>
</feature>
<feature type="binding site" evidence="1">
    <location>
        <position position="243"/>
    </location>
    <ligand>
        <name>NADP(+)</name>
        <dbReference type="ChEBI" id="CHEBI:58349"/>
    </ligand>
</feature>
<feature type="binding site" evidence="1">
    <location>
        <begin position="264"/>
        <end position="269"/>
    </location>
    <ligand>
        <name>NADP(+)</name>
        <dbReference type="ChEBI" id="CHEBI:58349"/>
    </ligand>
</feature>
<feature type="binding site" evidence="1">
    <location>
        <begin position="287"/>
        <end position="292"/>
    </location>
    <ligand>
        <name>NADP(+)</name>
        <dbReference type="ChEBI" id="CHEBI:58349"/>
    </ligand>
</feature>
<feature type="binding site" evidence="1">
    <location>
        <position position="327"/>
    </location>
    <ligand>
        <name>NADP(+)</name>
        <dbReference type="ChEBI" id="CHEBI:58349"/>
    </ligand>
</feature>
<feature type="binding site" evidence="1">
    <location>
        <position position="351"/>
    </location>
    <ligand>
        <name>NADP(+)</name>
        <dbReference type="ChEBI" id="CHEBI:58349"/>
    </ligand>
</feature>
<feature type="binding site" evidence="1">
    <location>
        <begin position="374"/>
        <end position="376"/>
    </location>
    <ligand>
        <name>NADP(+)</name>
        <dbReference type="ChEBI" id="CHEBI:58349"/>
    </ligand>
</feature>
<feature type="splice variant" id="VSP_037891" description="In isoform 2." evidence="2">
    <location>
        <begin position="1"/>
        <end position="134"/>
    </location>
</feature>
<reference key="1">
    <citation type="journal article" date="2005" name="Nature">
        <title>The map-based sequence of the rice genome.</title>
        <authorList>
            <consortium name="International rice genome sequencing project (IRGSP)"/>
        </authorList>
    </citation>
    <scope>NUCLEOTIDE SEQUENCE [LARGE SCALE GENOMIC DNA]</scope>
    <source>
        <strain>cv. Nipponbare</strain>
    </source>
</reference>
<reference key="2">
    <citation type="journal article" date="2008" name="Nucleic Acids Res.">
        <title>The rice annotation project database (RAP-DB): 2008 update.</title>
        <authorList>
            <consortium name="The rice annotation project (RAP)"/>
        </authorList>
    </citation>
    <scope>GENOME REANNOTATION</scope>
    <source>
        <strain>cv. Nipponbare</strain>
    </source>
</reference>
<reference key="3">
    <citation type="journal article" date="2013" name="Rice">
        <title>Improvement of the Oryza sativa Nipponbare reference genome using next generation sequence and optical map data.</title>
        <authorList>
            <person name="Kawahara Y."/>
            <person name="de la Bastide M."/>
            <person name="Hamilton J.P."/>
            <person name="Kanamori H."/>
            <person name="McCombie W.R."/>
            <person name="Ouyang S."/>
            <person name="Schwartz D.C."/>
            <person name="Tanaka T."/>
            <person name="Wu J."/>
            <person name="Zhou S."/>
            <person name="Childs K.L."/>
            <person name="Davidson R.M."/>
            <person name="Lin H."/>
            <person name="Quesada-Ocampo L."/>
            <person name="Vaillancourt B."/>
            <person name="Sakai H."/>
            <person name="Lee S.S."/>
            <person name="Kim J."/>
            <person name="Numa H."/>
            <person name="Itoh T."/>
            <person name="Buell C.R."/>
            <person name="Matsumoto T."/>
        </authorList>
    </citation>
    <scope>GENOME REANNOTATION</scope>
    <source>
        <strain>cv. Nipponbare</strain>
    </source>
</reference>
<reference key="4">
    <citation type="journal article" date="2005" name="PLoS Biol.">
        <title>The genomes of Oryza sativa: a history of duplications.</title>
        <authorList>
            <person name="Yu J."/>
            <person name="Wang J."/>
            <person name="Lin W."/>
            <person name="Li S."/>
            <person name="Li H."/>
            <person name="Zhou J."/>
            <person name="Ni P."/>
            <person name="Dong W."/>
            <person name="Hu S."/>
            <person name="Zeng C."/>
            <person name="Zhang J."/>
            <person name="Zhang Y."/>
            <person name="Li R."/>
            <person name="Xu Z."/>
            <person name="Li S."/>
            <person name="Li X."/>
            <person name="Zheng H."/>
            <person name="Cong L."/>
            <person name="Lin L."/>
            <person name="Yin J."/>
            <person name="Geng J."/>
            <person name="Li G."/>
            <person name="Shi J."/>
            <person name="Liu J."/>
            <person name="Lv H."/>
            <person name="Li J."/>
            <person name="Wang J."/>
            <person name="Deng Y."/>
            <person name="Ran L."/>
            <person name="Shi X."/>
            <person name="Wang X."/>
            <person name="Wu Q."/>
            <person name="Li C."/>
            <person name="Ren X."/>
            <person name="Wang J."/>
            <person name="Wang X."/>
            <person name="Li D."/>
            <person name="Liu D."/>
            <person name="Zhang X."/>
            <person name="Ji Z."/>
            <person name="Zhao W."/>
            <person name="Sun Y."/>
            <person name="Zhang Z."/>
            <person name="Bao J."/>
            <person name="Han Y."/>
            <person name="Dong L."/>
            <person name="Ji J."/>
            <person name="Chen P."/>
            <person name="Wu S."/>
            <person name="Liu J."/>
            <person name="Xiao Y."/>
            <person name="Bu D."/>
            <person name="Tan J."/>
            <person name="Yang L."/>
            <person name="Ye C."/>
            <person name="Zhang J."/>
            <person name="Xu J."/>
            <person name="Zhou Y."/>
            <person name="Yu Y."/>
            <person name="Zhang B."/>
            <person name="Zhuang S."/>
            <person name="Wei H."/>
            <person name="Liu B."/>
            <person name="Lei M."/>
            <person name="Yu H."/>
            <person name="Li Y."/>
            <person name="Xu H."/>
            <person name="Wei S."/>
            <person name="He X."/>
            <person name="Fang L."/>
            <person name="Zhang Z."/>
            <person name="Zhang Y."/>
            <person name="Huang X."/>
            <person name="Su Z."/>
            <person name="Tong W."/>
            <person name="Li J."/>
            <person name="Tong Z."/>
            <person name="Li S."/>
            <person name="Ye J."/>
            <person name="Wang L."/>
            <person name="Fang L."/>
            <person name="Lei T."/>
            <person name="Chen C.-S."/>
            <person name="Chen H.-C."/>
            <person name="Xu Z."/>
            <person name="Li H."/>
            <person name="Huang H."/>
            <person name="Zhang F."/>
            <person name="Xu H."/>
            <person name="Li N."/>
            <person name="Zhao C."/>
            <person name="Li S."/>
            <person name="Dong L."/>
            <person name="Huang Y."/>
            <person name="Li L."/>
            <person name="Xi Y."/>
            <person name="Qi Q."/>
            <person name="Li W."/>
            <person name="Zhang B."/>
            <person name="Hu W."/>
            <person name="Zhang Y."/>
            <person name="Tian X."/>
            <person name="Jiao Y."/>
            <person name="Liang X."/>
            <person name="Jin J."/>
            <person name="Gao L."/>
            <person name="Zheng W."/>
            <person name="Hao B."/>
            <person name="Liu S.-M."/>
            <person name="Wang W."/>
            <person name="Yuan L."/>
            <person name="Cao M."/>
            <person name="McDermott J."/>
            <person name="Samudrala R."/>
            <person name="Wang J."/>
            <person name="Wong G.K.-S."/>
            <person name="Yang H."/>
        </authorList>
    </citation>
    <scope>NUCLEOTIDE SEQUENCE [LARGE SCALE GENOMIC DNA]</scope>
    <source>
        <strain>cv. Nipponbare</strain>
    </source>
</reference>
<reference key="5">
    <citation type="journal article" date="2003" name="Science">
        <title>Collection, mapping, and annotation of over 28,000 cDNA clones from japonica rice.</title>
        <authorList>
            <consortium name="The rice full-length cDNA consortium"/>
        </authorList>
    </citation>
    <scope>NUCLEOTIDE SEQUENCE [LARGE SCALE MRNA] (ISOFORM 2)</scope>
    <source>
        <strain>cv. Nipponbare</strain>
    </source>
</reference>
<reference key="6">
    <citation type="journal article" date="2005" name="Planta">
        <title>Structure of the cinnamyl-alcohol dehydrogenase gene family in rice and promoter activity of a member associated with lignification.</title>
        <authorList>
            <person name="Tobias C.M."/>
            <person name="Chow E.K."/>
        </authorList>
    </citation>
    <scope>GENE FAMILY</scope>
    <scope>NOMENCLATURE</scope>
</reference>
<dbReference type="EC" id="1.1.1.195" evidence="1"/>
<dbReference type="EMBL" id="AP005321">
    <property type="protein sequence ID" value="BAD28502.1"/>
    <property type="molecule type" value="Genomic_DNA"/>
</dbReference>
<dbReference type="EMBL" id="AP005421">
    <property type="protein sequence ID" value="BAD28603.1"/>
    <property type="molecule type" value="Genomic_DNA"/>
</dbReference>
<dbReference type="EMBL" id="AP008215">
    <property type="protein sequence ID" value="BAF25026.1"/>
    <property type="status" value="ALT_SEQ"/>
    <property type="molecule type" value="Genomic_DNA"/>
</dbReference>
<dbReference type="EMBL" id="AP014965">
    <property type="protein sequence ID" value="BAT07961.1"/>
    <property type="status" value="ALT_SEQ"/>
    <property type="molecule type" value="Genomic_DNA"/>
</dbReference>
<dbReference type="EMBL" id="CM000146">
    <property type="protein sequence ID" value="EEE69662.1"/>
    <property type="molecule type" value="Genomic_DNA"/>
</dbReference>
<dbReference type="EMBL" id="AK067085">
    <property type="status" value="NOT_ANNOTATED_CDS"/>
    <property type="molecule type" value="mRNA"/>
</dbReference>
<dbReference type="RefSeq" id="XP_015612229.1">
    <property type="nucleotide sequence ID" value="XM_015756743.1"/>
</dbReference>
<dbReference type="SMR" id="Q6ERW7"/>
<dbReference type="FunCoup" id="Q6ERW7">
    <property type="interactions" value="57"/>
</dbReference>
<dbReference type="STRING" id="39947.Q6ERW7"/>
<dbReference type="PaxDb" id="39947-Q6ERW7"/>
<dbReference type="InParanoid" id="Q6ERW7"/>
<dbReference type="OrthoDB" id="1879366at2759"/>
<dbReference type="UniPathway" id="UPA00711"/>
<dbReference type="Proteomes" id="UP000000763">
    <property type="component" value="Chromosome 9"/>
</dbReference>
<dbReference type="Proteomes" id="UP000007752">
    <property type="component" value="Chromosome 9"/>
</dbReference>
<dbReference type="Proteomes" id="UP000059680">
    <property type="component" value="Chromosome 9"/>
</dbReference>
<dbReference type="GO" id="GO:0045551">
    <property type="term" value="F:cinnamyl-alcohol dehydrogenase activity"/>
    <property type="evidence" value="ECO:0000318"/>
    <property type="project" value="GO_Central"/>
</dbReference>
<dbReference type="GO" id="GO:0050268">
    <property type="term" value="F:coniferyl-alcohol dehydrogenase activity"/>
    <property type="evidence" value="ECO:0007669"/>
    <property type="project" value="RHEA"/>
</dbReference>
<dbReference type="GO" id="GO:0008270">
    <property type="term" value="F:zinc ion binding"/>
    <property type="evidence" value="ECO:0007669"/>
    <property type="project" value="InterPro"/>
</dbReference>
<dbReference type="GO" id="GO:0009809">
    <property type="term" value="P:lignin biosynthetic process"/>
    <property type="evidence" value="ECO:0000318"/>
    <property type="project" value="GO_Central"/>
</dbReference>
<dbReference type="CDD" id="cd05283">
    <property type="entry name" value="CAD1"/>
    <property type="match status" value="1"/>
</dbReference>
<dbReference type="FunFam" id="3.40.50.720:FF:000022">
    <property type="entry name" value="Cinnamyl alcohol dehydrogenase"/>
    <property type="match status" value="1"/>
</dbReference>
<dbReference type="FunFam" id="3.90.180.10:FF:000004">
    <property type="entry name" value="probable cinnamyl alcohol dehydrogenase"/>
    <property type="match status" value="1"/>
</dbReference>
<dbReference type="FunFam" id="3.90.180.10:FF:000100">
    <property type="entry name" value="Putative cinnamyl alcohol dehydrogenase 6"/>
    <property type="match status" value="1"/>
</dbReference>
<dbReference type="Gene3D" id="3.90.180.10">
    <property type="entry name" value="Medium-chain alcohol dehydrogenases, catalytic domain"/>
    <property type="match status" value="1"/>
</dbReference>
<dbReference type="Gene3D" id="3.40.50.720">
    <property type="entry name" value="NAD(P)-binding Rossmann-like Domain"/>
    <property type="match status" value="1"/>
</dbReference>
<dbReference type="InterPro" id="IPR013149">
    <property type="entry name" value="ADH-like_C"/>
</dbReference>
<dbReference type="InterPro" id="IPR013154">
    <property type="entry name" value="ADH-like_N"/>
</dbReference>
<dbReference type="InterPro" id="IPR002328">
    <property type="entry name" value="ADH_Zn_CS"/>
</dbReference>
<dbReference type="InterPro" id="IPR047109">
    <property type="entry name" value="CAD-like"/>
</dbReference>
<dbReference type="InterPro" id="IPR011032">
    <property type="entry name" value="GroES-like_sf"/>
</dbReference>
<dbReference type="InterPro" id="IPR036291">
    <property type="entry name" value="NAD(P)-bd_dom_sf"/>
</dbReference>
<dbReference type="InterPro" id="IPR020843">
    <property type="entry name" value="PKS_ER"/>
</dbReference>
<dbReference type="PANTHER" id="PTHR42683">
    <property type="entry name" value="ALDEHYDE REDUCTASE"/>
    <property type="match status" value="1"/>
</dbReference>
<dbReference type="Pfam" id="PF08240">
    <property type="entry name" value="ADH_N"/>
    <property type="match status" value="1"/>
</dbReference>
<dbReference type="Pfam" id="PF00107">
    <property type="entry name" value="ADH_zinc_N"/>
    <property type="match status" value="1"/>
</dbReference>
<dbReference type="SMART" id="SM00829">
    <property type="entry name" value="PKS_ER"/>
    <property type="match status" value="1"/>
</dbReference>
<dbReference type="SUPFAM" id="SSF50129">
    <property type="entry name" value="GroES-like"/>
    <property type="match status" value="1"/>
</dbReference>
<dbReference type="SUPFAM" id="SSF51735">
    <property type="entry name" value="NAD(P)-binding Rossmann-fold domains"/>
    <property type="match status" value="1"/>
</dbReference>
<dbReference type="PROSITE" id="PS00059">
    <property type="entry name" value="ADH_ZINC"/>
    <property type="match status" value="1"/>
</dbReference>
<name>CAD8C_ORYSJ</name>
<comment type="function">
    <text evidence="1">Involved in lignin biosynthesis. Catalyzes the final step specific for the production of lignin monomers. Catalyzes the NADPH-dependent reduction of coniferaldehyde, 5-hydroxyconiferaldehyde, sinapaldehyde, 4-coumaraldehyde and caffeyl aldehyde to their respective alcohols.</text>
</comment>
<comment type="catalytic activity">
    <reaction evidence="1">
        <text>(E)-cinnamyl alcohol + NADP(+) = (E)-cinnamaldehyde + NADPH + H(+)</text>
        <dbReference type="Rhea" id="RHEA:10392"/>
        <dbReference type="ChEBI" id="CHEBI:15378"/>
        <dbReference type="ChEBI" id="CHEBI:16731"/>
        <dbReference type="ChEBI" id="CHEBI:33227"/>
        <dbReference type="ChEBI" id="CHEBI:57783"/>
        <dbReference type="ChEBI" id="CHEBI:58349"/>
        <dbReference type="EC" id="1.1.1.195"/>
    </reaction>
    <physiologicalReaction direction="right-to-left" evidence="1">
        <dbReference type="Rhea" id="RHEA:10394"/>
    </physiologicalReaction>
</comment>
<comment type="catalytic activity">
    <reaction evidence="1">
        <text>(E)-coniferol + NADP(+) = (E)-coniferaldehyde + NADPH + H(+)</text>
        <dbReference type="Rhea" id="RHEA:22444"/>
        <dbReference type="ChEBI" id="CHEBI:15378"/>
        <dbReference type="ChEBI" id="CHEBI:16547"/>
        <dbReference type="ChEBI" id="CHEBI:17745"/>
        <dbReference type="ChEBI" id="CHEBI:57783"/>
        <dbReference type="ChEBI" id="CHEBI:58349"/>
        <dbReference type="EC" id="1.1.1.195"/>
    </reaction>
    <physiologicalReaction direction="right-to-left" evidence="1">
        <dbReference type="Rhea" id="RHEA:22446"/>
    </physiologicalReaction>
</comment>
<comment type="catalytic activity">
    <reaction evidence="1">
        <text>(E)-sinapyl alcohol + NADP(+) = (E)-sinapaldehyde + NADPH + H(+)</text>
        <dbReference type="Rhea" id="RHEA:45704"/>
        <dbReference type="ChEBI" id="CHEBI:15378"/>
        <dbReference type="ChEBI" id="CHEBI:27949"/>
        <dbReference type="ChEBI" id="CHEBI:57783"/>
        <dbReference type="ChEBI" id="CHEBI:58349"/>
        <dbReference type="ChEBI" id="CHEBI:64557"/>
        <dbReference type="EC" id="1.1.1.195"/>
    </reaction>
    <physiologicalReaction direction="right-to-left" evidence="1">
        <dbReference type="Rhea" id="RHEA:45706"/>
    </physiologicalReaction>
</comment>
<comment type="catalytic activity">
    <reaction evidence="1">
        <text>(E)-4-coumaroyl alcohol + NADP(+) = (E)-4-coumaraldehyde + NADPH + H(+)</text>
        <dbReference type="Rhea" id="RHEA:45724"/>
        <dbReference type="ChEBI" id="CHEBI:15378"/>
        <dbReference type="ChEBI" id="CHEBI:28353"/>
        <dbReference type="ChEBI" id="CHEBI:57783"/>
        <dbReference type="ChEBI" id="CHEBI:58349"/>
        <dbReference type="ChEBI" id="CHEBI:64555"/>
        <dbReference type="EC" id="1.1.1.195"/>
    </reaction>
    <physiologicalReaction direction="right-to-left" evidence="1">
        <dbReference type="Rhea" id="RHEA:45726"/>
    </physiologicalReaction>
</comment>
<comment type="catalytic activity">
    <reaction evidence="1">
        <text>(E)-caffeyl alcohol + NADP(+) = (E)-caffeyl aldehyde + NADPH + H(+)</text>
        <dbReference type="Rhea" id="RHEA:45728"/>
        <dbReference type="ChEBI" id="CHEBI:15378"/>
        <dbReference type="ChEBI" id="CHEBI:28323"/>
        <dbReference type="ChEBI" id="CHEBI:31334"/>
        <dbReference type="ChEBI" id="CHEBI:57783"/>
        <dbReference type="ChEBI" id="CHEBI:58349"/>
    </reaction>
    <physiologicalReaction direction="right-to-left" evidence="1">
        <dbReference type="Rhea" id="RHEA:45730"/>
    </physiologicalReaction>
</comment>
<comment type="cofactor">
    <cofactor evidence="1">
        <name>Zn(2+)</name>
        <dbReference type="ChEBI" id="CHEBI:29105"/>
    </cofactor>
    <text evidence="1">Binds 2 Zn(2+) ions per subunit.</text>
</comment>
<comment type="pathway">
    <text evidence="1">Aromatic compound metabolism; phenylpropanoid biosynthesis.</text>
</comment>
<comment type="subunit">
    <text evidence="1">Homodimer.</text>
</comment>
<comment type="alternative products">
    <event type="alternative splicing"/>
    <isoform>
        <id>Q6ERW7-1</id>
        <name>1</name>
        <sequence type="displayed"/>
    </isoform>
    <isoform>
        <id>Q6ERW7-2</id>
        <name>2</name>
        <sequence type="described" ref="VSP_037891"/>
    </isoform>
</comment>
<comment type="similarity">
    <text evidence="4">Belongs to the zinc-containing alcohol dehydrogenase family.</text>
</comment>
<comment type="sequence caution" evidence="4">
    <conflict type="erroneous gene model prediction">
        <sequence resource="EMBL-CDS" id="BAF25026"/>
    </conflict>
</comment>
<comment type="sequence caution" evidence="4">
    <conflict type="erroneous gene model prediction">
        <sequence resource="EMBL-CDS" id="BAT07961"/>
    </conflict>
</comment>
<keyword id="KW-0025">Alternative splicing</keyword>
<keyword id="KW-0438">Lignin biosynthesis</keyword>
<keyword id="KW-0479">Metal-binding</keyword>
<keyword id="KW-0521">NADP</keyword>
<keyword id="KW-0560">Oxidoreductase</keyword>
<keyword id="KW-1185">Reference proteome</keyword>
<keyword id="KW-0862">Zinc</keyword>